<accession>G3QY98</accession>
<feature type="signal peptide" evidence="5">
    <location>
        <begin position="1"/>
        <end position="18"/>
    </location>
</feature>
<feature type="chain" id="PRO_0000425321" description="Proapolipoprotein A-I">
    <location>
        <begin position="19"/>
        <end position="267"/>
    </location>
</feature>
<feature type="chain" id="PRO_0000415938" description="Apolipoprotein A-I">
    <location>
        <begin position="25"/>
        <end position="267"/>
    </location>
</feature>
<feature type="chain" id="PRO_0000416573" description="Truncated apolipoprotein A-I">
    <location>
        <begin position="25"/>
        <end position="266"/>
    </location>
</feature>
<feature type="repeat" description="1">
    <location>
        <begin position="68"/>
        <end position="89"/>
    </location>
</feature>
<feature type="repeat" description="2">
    <location>
        <begin position="90"/>
        <end position="111"/>
    </location>
</feature>
<feature type="repeat" description="3; half-length">
    <location>
        <begin position="112"/>
        <end position="122"/>
    </location>
</feature>
<feature type="repeat" description="4">
    <location>
        <begin position="123"/>
        <end position="144"/>
    </location>
</feature>
<feature type="repeat" description="5">
    <location>
        <begin position="145"/>
        <end position="166"/>
    </location>
</feature>
<feature type="repeat" description="6">
    <location>
        <begin position="167"/>
        <end position="188"/>
    </location>
</feature>
<feature type="repeat" description="7">
    <location>
        <begin position="189"/>
        <end position="210"/>
    </location>
</feature>
<feature type="repeat" description="8">
    <location>
        <begin position="211"/>
        <end position="232"/>
    </location>
</feature>
<feature type="repeat" description="9; half-length">
    <location>
        <begin position="233"/>
        <end position="243"/>
    </location>
</feature>
<feature type="repeat" description="10">
    <location>
        <begin position="244"/>
        <end position="267"/>
    </location>
</feature>
<feature type="region of interest" description="10 X approximate tandem repeats">
    <location>
        <begin position="68"/>
        <end position="267"/>
    </location>
</feature>
<feature type="modified residue" description="Methionine sulfoxide" evidence="1">
    <location>
        <position position="110"/>
    </location>
</feature>
<feature type="modified residue" description="Methionine sulfoxide" evidence="1">
    <location>
        <position position="136"/>
    </location>
</feature>
<protein>
    <recommendedName>
        <fullName>Apolipoprotein A-I</fullName>
        <shortName>Apo-AI</shortName>
        <shortName>ApoA-I</shortName>
    </recommendedName>
    <alternativeName>
        <fullName>Apolipoprotein A1</fullName>
    </alternativeName>
    <component>
        <recommendedName>
            <fullName>Proapolipoprotein A-I</fullName>
            <shortName>ProapoA-I</shortName>
        </recommendedName>
    </component>
    <component>
        <recommendedName>
            <fullName>Truncated apolipoprotein A-I</fullName>
        </recommendedName>
    </component>
</protein>
<comment type="function">
    <text evidence="1">Participates in the reverse transport of cholesterol from tissues to the liver for excretion by promoting cholesterol efflux from tissues and by acting as a cofactor for the lecithin cholesterol acyltransferase (LCAT). As part of the SPAP complex, activates spermatozoa motility (By similarity).</text>
</comment>
<comment type="subunit">
    <text evidence="2 3 4">Homodimer (By similarity). Interacts with APOA1BP and CLU. Component of a sperm activating protein complex (SPAP), consisting of APOA1, an immunoglobulin heavy chain, an immunoglobulin light chain and albumin. Interacts with NDRG1. Interacts with SCGB3A2 (By similarity). Interacts with NAXE and YJEFN3 (By similarity).</text>
</comment>
<comment type="subcellular location">
    <subcellularLocation>
        <location>Secreted</location>
    </subcellularLocation>
</comment>
<comment type="tissue specificity">
    <text>Major protein of plasma HDL, also found in chylomicrons.</text>
</comment>
<comment type="PTM">
    <text evidence="1">Glycosylated.</text>
</comment>
<comment type="PTM">
    <text evidence="1">Palmitoylated.</text>
</comment>
<comment type="PTM">
    <text evidence="1">Phosphorylation sites are present in the extracellular medium.</text>
</comment>
<comment type="mass spectrometry">
    <molecule>Apolipoprotein A-I</molecule>
</comment>
<comment type="similarity">
    <text evidence="7">Belongs to the apolipoprotein A1/A4/E family.</text>
</comment>
<reference key="1">
    <citation type="submission" date="2011-05" db="EMBL/GenBank/DDBJ databases">
        <title>Insights into the evolution of the great apes provided by the gorilla genome.</title>
        <authorList>
            <person name="Scally A."/>
        </authorList>
    </citation>
    <scope>NUCLEOTIDE SEQUENCE [LARGE SCALE GENOMIC DNA]</scope>
</reference>
<reference key="2">
    <citation type="journal article" date="2009" name="Comp. Biochem. Physiol.">
        <title>Mass spectral analyses of the two major apolipoproteins of great ape high density lipoproteins.</title>
        <authorList>
            <person name="Puppione D.L."/>
            <person name="Della Donna L."/>
            <person name="Laganowsky A.D."/>
            <person name="Bassilian S."/>
            <person name="Souda P."/>
            <person name="Ryder O.A."/>
            <person name="Whitelegge J.P."/>
        </authorList>
    </citation>
    <scope>IDENTIFICATION BY MASS SPECTROMETRY</scope>
</reference>
<keyword id="KW-0153">Cholesterol metabolism</keyword>
<keyword id="KW-0325">Glycoprotein</keyword>
<keyword id="KW-0345">HDL</keyword>
<keyword id="KW-0443">Lipid metabolism</keyword>
<keyword id="KW-0445">Lipid transport</keyword>
<keyword id="KW-0449">Lipoprotein</keyword>
<keyword id="KW-0558">Oxidation</keyword>
<keyword id="KW-0564">Palmitate</keyword>
<keyword id="KW-0597">Phosphoprotein</keyword>
<keyword id="KW-1185">Reference proteome</keyword>
<keyword id="KW-0677">Repeat</keyword>
<keyword id="KW-0964">Secreted</keyword>
<keyword id="KW-0732">Signal</keyword>
<keyword id="KW-0753">Steroid metabolism</keyword>
<keyword id="KW-1207">Sterol metabolism</keyword>
<keyword id="KW-0813">Transport</keyword>
<dbReference type="RefSeq" id="XP_004052230.1">
    <property type="nucleotide sequence ID" value="XM_004052182.4"/>
</dbReference>
<dbReference type="BMRB" id="G3QY98"/>
<dbReference type="SMR" id="G3QY98"/>
<dbReference type="FunCoup" id="G3QY98">
    <property type="interactions" value="140"/>
</dbReference>
<dbReference type="STRING" id="9593.ENSGGOP00000033442"/>
<dbReference type="Ensembl" id="ENSGGOT00000008040.3">
    <property type="protein sequence ID" value="ENSGGOP00000007828.2"/>
    <property type="gene ID" value="ENSGGOG00000008006.3"/>
</dbReference>
<dbReference type="Ensembl" id="ENSGGOT00000048162.1">
    <property type="protein sequence ID" value="ENSGGOP00000033442.1"/>
    <property type="gene ID" value="ENSGGOG00000008006.3"/>
</dbReference>
<dbReference type="GeneID" id="101137897"/>
<dbReference type="KEGG" id="ggo:101137897"/>
<dbReference type="CTD" id="335"/>
<dbReference type="eggNOG" id="ENOG502S1XQ">
    <property type="taxonomic scope" value="Eukaryota"/>
</dbReference>
<dbReference type="GeneTree" id="ENSGT00950000182929"/>
<dbReference type="HOGENOM" id="CLU_058447_1_0_1"/>
<dbReference type="InParanoid" id="G3QY98"/>
<dbReference type="OMA" id="EYVAQFE"/>
<dbReference type="OrthoDB" id="12804at9604"/>
<dbReference type="Proteomes" id="UP000001519">
    <property type="component" value="Chromosome 11"/>
</dbReference>
<dbReference type="Bgee" id="ENSGGOG00000008006">
    <property type="expression patterns" value="Expressed in liver and 5 other cell types or tissues"/>
</dbReference>
<dbReference type="GO" id="GO:0042627">
    <property type="term" value="C:chylomicron"/>
    <property type="evidence" value="ECO:0000318"/>
    <property type="project" value="GO_Central"/>
</dbReference>
<dbReference type="GO" id="GO:0030139">
    <property type="term" value="C:endocytic vesicle"/>
    <property type="evidence" value="ECO:0007669"/>
    <property type="project" value="Ensembl"/>
</dbReference>
<dbReference type="GO" id="GO:1903561">
    <property type="term" value="C:extracellular vesicle"/>
    <property type="evidence" value="ECO:0000318"/>
    <property type="project" value="GO_Central"/>
</dbReference>
<dbReference type="GO" id="GO:0034364">
    <property type="term" value="C:high-density lipoprotein particle"/>
    <property type="evidence" value="ECO:0000318"/>
    <property type="project" value="GO_Central"/>
</dbReference>
<dbReference type="GO" id="GO:0034362">
    <property type="term" value="C:low-density lipoprotein particle"/>
    <property type="evidence" value="ECO:0000318"/>
    <property type="project" value="GO_Central"/>
</dbReference>
<dbReference type="GO" id="GO:0034366">
    <property type="term" value="C:spherical high-density lipoprotein particle"/>
    <property type="evidence" value="ECO:0007669"/>
    <property type="project" value="Ensembl"/>
</dbReference>
<dbReference type="GO" id="GO:0034361">
    <property type="term" value="C:very-low-density lipoprotein particle"/>
    <property type="evidence" value="ECO:0000318"/>
    <property type="project" value="GO_Central"/>
</dbReference>
<dbReference type="GO" id="GO:0001540">
    <property type="term" value="F:amyloid-beta binding"/>
    <property type="evidence" value="ECO:0007669"/>
    <property type="project" value="Ensembl"/>
</dbReference>
<dbReference type="GO" id="GO:0034191">
    <property type="term" value="F:apolipoprotein A-I receptor binding"/>
    <property type="evidence" value="ECO:0007669"/>
    <property type="project" value="Ensembl"/>
</dbReference>
<dbReference type="GO" id="GO:0045499">
    <property type="term" value="F:chemorepellent activity"/>
    <property type="evidence" value="ECO:0007669"/>
    <property type="project" value="Ensembl"/>
</dbReference>
<dbReference type="GO" id="GO:0015485">
    <property type="term" value="F:cholesterol binding"/>
    <property type="evidence" value="ECO:0007669"/>
    <property type="project" value="Ensembl"/>
</dbReference>
<dbReference type="GO" id="GO:0120020">
    <property type="term" value="F:cholesterol transfer activity"/>
    <property type="evidence" value="ECO:0000318"/>
    <property type="project" value="GO_Central"/>
</dbReference>
<dbReference type="GO" id="GO:0019899">
    <property type="term" value="F:enzyme binding"/>
    <property type="evidence" value="ECO:0007669"/>
    <property type="project" value="Ensembl"/>
</dbReference>
<dbReference type="GO" id="GO:0031072">
    <property type="term" value="F:heat shock protein binding"/>
    <property type="evidence" value="ECO:0007669"/>
    <property type="project" value="Ensembl"/>
</dbReference>
<dbReference type="GO" id="GO:0008035">
    <property type="term" value="F:high-density lipoprotein particle binding"/>
    <property type="evidence" value="ECO:0007669"/>
    <property type="project" value="Ensembl"/>
</dbReference>
<dbReference type="GO" id="GO:0070653">
    <property type="term" value="F:high-density lipoprotein particle receptor binding"/>
    <property type="evidence" value="ECO:0007669"/>
    <property type="project" value="Ensembl"/>
</dbReference>
<dbReference type="GO" id="GO:0060228">
    <property type="term" value="F:phosphatidylcholine-sterol O-acyltransferase activator activity"/>
    <property type="evidence" value="ECO:0000318"/>
    <property type="project" value="GO_Central"/>
</dbReference>
<dbReference type="GO" id="GO:0005543">
    <property type="term" value="F:phospholipid binding"/>
    <property type="evidence" value="ECO:0000318"/>
    <property type="project" value="GO_Central"/>
</dbReference>
<dbReference type="GO" id="GO:0042803">
    <property type="term" value="F:protein homodimerization activity"/>
    <property type="evidence" value="ECO:0000250"/>
    <property type="project" value="UniProtKB"/>
</dbReference>
<dbReference type="GO" id="GO:0055090">
    <property type="term" value="P:acylglycerol homeostasis"/>
    <property type="evidence" value="ECO:0000318"/>
    <property type="project" value="GO_Central"/>
</dbReference>
<dbReference type="GO" id="GO:0030325">
    <property type="term" value="P:adrenal gland development"/>
    <property type="evidence" value="ECO:0007669"/>
    <property type="project" value="Ensembl"/>
</dbReference>
<dbReference type="GO" id="GO:0034205">
    <property type="term" value="P:amyloid-beta formation"/>
    <property type="evidence" value="ECO:0007669"/>
    <property type="project" value="Ensembl"/>
</dbReference>
<dbReference type="GO" id="GO:0043534">
    <property type="term" value="P:blood vessel endothelial cell migration"/>
    <property type="evidence" value="ECO:0007669"/>
    <property type="project" value="Ensembl"/>
</dbReference>
<dbReference type="GO" id="GO:0071402">
    <property type="term" value="P:cellular response to lipoprotein particle stimulus"/>
    <property type="evidence" value="ECO:0007669"/>
    <property type="project" value="Ensembl"/>
</dbReference>
<dbReference type="GO" id="GO:0006695">
    <property type="term" value="P:cholesterol biosynthetic process"/>
    <property type="evidence" value="ECO:0007669"/>
    <property type="project" value="Ensembl"/>
</dbReference>
<dbReference type="GO" id="GO:0033344">
    <property type="term" value="P:cholesterol efflux"/>
    <property type="evidence" value="ECO:0000318"/>
    <property type="project" value="GO_Central"/>
</dbReference>
<dbReference type="GO" id="GO:0042632">
    <property type="term" value="P:cholesterol homeostasis"/>
    <property type="evidence" value="ECO:0007669"/>
    <property type="project" value="Ensembl"/>
</dbReference>
<dbReference type="GO" id="GO:0070508">
    <property type="term" value="P:cholesterol import"/>
    <property type="evidence" value="ECO:0007669"/>
    <property type="project" value="Ensembl"/>
</dbReference>
<dbReference type="GO" id="GO:0008203">
    <property type="term" value="P:cholesterol metabolic process"/>
    <property type="evidence" value="ECO:0000318"/>
    <property type="project" value="GO_Central"/>
</dbReference>
<dbReference type="GO" id="GO:0001935">
    <property type="term" value="P:endothelial cell proliferation"/>
    <property type="evidence" value="ECO:0007669"/>
    <property type="project" value="Ensembl"/>
</dbReference>
<dbReference type="GO" id="GO:0007186">
    <property type="term" value="P:G protein-coupled receptor signaling pathway"/>
    <property type="evidence" value="ECO:0007669"/>
    <property type="project" value="Ensembl"/>
</dbReference>
<dbReference type="GO" id="GO:0008211">
    <property type="term" value="P:glucocorticoid metabolic process"/>
    <property type="evidence" value="ECO:0007669"/>
    <property type="project" value="Ensembl"/>
</dbReference>
<dbReference type="GO" id="GO:0034380">
    <property type="term" value="P:high-density lipoprotein particle assembly"/>
    <property type="evidence" value="ECO:0007669"/>
    <property type="project" value="Ensembl"/>
</dbReference>
<dbReference type="GO" id="GO:0034375">
    <property type="term" value="P:high-density lipoprotein particle remodeling"/>
    <property type="evidence" value="ECO:0007669"/>
    <property type="project" value="Ensembl"/>
</dbReference>
<dbReference type="GO" id="GO:0007229">
    <property type="term" value="P:integrin-mediated signaling pathway"/>
    <property type="evidence" value="ECO:0007669"/>
    <property type="project" value="Ensembl"/>
</dbReference>
<dbReference type="GO" id="GO:0019915">
    <property type="term" value="P:lipid storage"/>
    <property type="evidence" value="ECO:0007669"/>
    <property type="project" value="Ensembl"/>
</dbReference>
<dbReference type="GO" id="GO:0042158">
    <property type="term" value="P:lipoprotein biosynthetic process"/>
    <property type="evidence" value="ECO:0007669"/>
    <property type="project" value="Ensembl"/>
</dbReference>
<dbReference type="GO" id="GO:0060354">
    <property type="term" value="P:negative regulation of cell adhesion molecule production"/>
    <property type="evidence" value="ECO:0007669"/>
    <property type="project" value="Ensembl"/>
</dbReference>
<dbReference type="GO" id="GO:0002719">
    <property type="term" value="P:negative regulation of cytokine production involved in immune response"/>
    <property type="evidence" value="ECO:0007669"/>
    <property type="project" value="Ensembl"/>
</dbReference>
<dbReference type="GO" id="GO:0034115">
    <property type="term" value="P:negative regulation of heterotypic cell-cell adhesion"/>
    <property type="evidence" value="ECO:0007669"/>
    <property type="project" value="Ensembl"/>
</dbReference>
<dbReference type="GO" id="GO:0050728">
    <property type="term" value="P:negative regulation of inflammatory response"/>
    <property type="evidence" value="ECO:0007669"/>
    <property type="project" value="Ensembl"/>
</dbReference>
<dbReference type="GO" id="GO:0032691">
    <property type="term" value="P:negative regulation of interleukin-1 beta production"/>
    <property type="evidence" value="ECO:0007669"/>
    <property type="project" value="Ensembl"/>
</dbReference>
<dbReference type="GO" id="GO:0010804">
    <property type="term" value="P:negative regulation of tumor necrosis factor-mediated signaling pathway"/>
    <property type="evidence" value="ECO:0007669"/>
    <property type="project" value="Ensembl"/>
</dbReference>
<dbReference type="GO" id="GO:0010903">
    <property type="term" value="P:negative regulation of very-low-density lipoprotein particle remodeling"/>
    <property type="evidence" value="ECO:0007669"/>
    <property type="project" value="Ensembl"/>
</dbReference>
<dbReference type="GO" id="GO:0018206">
    <property type="term" value="P:peptidyl-methionine modification"/>
    <property type="evidence" value="ECO:0000250"/>
    <property type="project" value="UniProtKB"/>
</dbReference>
<dbReference type="GO" id="GO:0006656">
    <property type="term" value="P:phosphatidylcholine biosynthetic process"/>
    <property type="evidence" value="ECO:0007669"/>
    <property type="project" value="Ensembl"/>
</dbReference>
<dbReference type="GO" id="GO:0033700">
    <property type="term" value="P:phospholipid efflux"/>
    <property type="evidence" value="ECO:0000318"/>
    <property type="project" value="GO_Central"/>
</dbReference>
<dbReference type="GO" id="GO:0055091">
    <property type="term" value="P:phospholipid homeostasis"/>
    <property type="evidence" value="ECO:0007669"/>
    <property type="project" value="Ensembl"/>
</dbReference>
<dbReference type="GO" id="GO:0010875">
    <property type="term" value="P:positive regulation of cholesterol efflux"/>
    <property type="evidence" value="ECO:0000250"/>
    <property type="project" value="UniProtKB"/>
</dbReference>
<dbReference type="GO" id="GO:0090205">
    <property type="term" value="P:positive regulation of cholesterol metabolic process"/>
    <property type="evidence" value="ECO:0007669"/>
    <property type="project" value="Ensembl"/>
</dbReference>
<dbReference type="GO" id="GO:0050766">
    <property type="term" value="P:positive regulation of phagocytosis"/>
    <property type="evidence" value="ECO:0000250"/>
    <property type="project" value="UniProtKB"/>
</dbReference>
<dbReference type="GO" id="GO:1902995">
    <property type="term" value="P:positive regulation of phospholipid efflux"/>
    <property type="evidence" value="ECO:0000250"/>
    <property type="project" value="UniProtKB"/>
</dbReference>
<dbReference type="GO" id="GO:0035025">
    <property type="term" value="P:positive regulation of Rho protein signal transduction"/>
    <property type="evidence" value="ECO:0007669"/>
    <property type="project" value="Ensembl"/>
</dbReference>
<dbReference type="GO" id="GO:0051496">
    <property type="term" value="P:positive regulation of stress fiber assembly"/>
    <property type="evidence" value="ECO:0007669"/>
    <property type="project" value="Ensembl"/>
</dbReference>
<dbReference type="GO" id="GO:1900026">
    <property type="term" value="P:positive regulation of substrate adhesion-dependent cell spreading"/>
    <property type="evidence" value="ECO:0007669"/>
    <property type="project" value="Ensembl"/>
</dbReference>
<dbReference type="GO" id="GO:0018158">
    <property type="term" value="P:protein oxidation"/>
    <property type="evidence" value="ECO:0000250"/>
    <property type="project" value="UniProtKB"/>
</dbReference>
<dbReference type="GO" id="GO:0050821">
    <property type="term" value="P:protein stabilization"/>
    <property type="evidence" value="ECO:0000250"/>
    <property type="project" value="UniProtKB"/>
</dbReference>
<dbReference type="GO" id="GO:0032489">
    <property type="term" value="P:regulation of Cdc42 protein signal transduction"/>
    <property type="evidence" value="ECO:0007669"/>
    <property type="project" value="Ensembl"/>
</dbReference>
<dbReference type="GO" id="GO:0030300">
    <property type="term" value="P:regulation of intestinal cholesterol absorption"/>
    <property type="evidence" value="ECO:0007669"/>
    <property type="project" value="Ensembl"/>
</dbReference>
<dbReference type="GO" id="GO:0043691">
    <property type="term" value="P:reverse cholesterol transport"/>
    <property type="evidence" value="ECO:0007669"/>
    <property type="project" value="Ensembl"/>
</dbReference>
<dbReference type="GO" id="GO:0070328">
    <property type="term" value="P:triglyceride homeostasis"/>
    <property type="evidence" value="ECO:0007669"/>
    <property type="project" value="Ensembl"/>
</dbReference>
<dbReference type="GO" id="GO:0051180">
    <property type="term" value="P:vitamin transport"/>
    <property type="evidence" value="ECO:0007669"/>
    <property type="project" value="Ensembl"/>
</dbReference>
<dbReference type="FunFam" id="1.20.120.20:FF:000001">
    <property type="entry name" value="Apolipoprotein A-I"/>
    <property type="match status" value="1"/>
</dbReference>
<dbReference type="FunFam" id="1.20.5.20:FF:000001">
    <property type="entry name" value="apolipoprotein A-I"/>
    <property type="match status" value="1"/>
</dbReference>
<dbReference type="Gene3D" id="1.20.5.20">
    <property type="match status" value="1"/>
</dbReference>
<dbReference type="Gene3D" id="6.10.140.380">
    <property type="match status" value="1"/>
</dbReference>
<dbReference type="Gene3D" id="1.20.120.20">
    <property type="entry name" value="Apolipoprotein"/>
    <property type="match status" value="1"/>
</dbReference>
<dbReference type="InterPro" id="IPR000074">
    <property type="entry name" value="ApoA_E"/>
</dbReference>
<dbReference type="InterPro" id="IPR050163">
    <property type="entry name" value="Apolipoprotein_A1/A4/E"/>
</dbReference>
<dbReference type="PANTHER" id="PTHR18976">
    <property type="entry name" value="APOLIPOPROTEIN"/>
    <property type="match status" value="1"/>
</dbReference>
<dbReference type="PANTHER" id="PTHR18976:SF11">
    <property type="entry name" value="APOLIPOPROTEIN A-I"/>
    <property type="match status" value="1"/>
</dbReference>
<dbReference type="Pfam" id="PF01442">
    <property type="entry name" value="Apolipoprotein"/>
    <property type="match status" value="1"/>
</dbReference>
<dbReference type="SUPFAM" id="SSF58113">
    <property type="entry name" value="Apolipoprotein A-I"/>
    <property type="match status" value="1"/>
</dbReference>
<name>APOA1_GORGO</name>
<sequence>MKAAVLTLAVLFLTGSQARHFWQQDEPPQSPWDRVKDLATVYVDVLKDSGRDYVSQFEGSALGKQLNLKLLDNWDSVTSTFSKLREQLGPVTQEFWDNLEKETEGLRQEMSKDLEEVKAKVQPYLDDFQKKWQEEMELYRQKVEPLRAELQEGARQKLHELQEKLSPLGEEMRDRARAHVDALRTHLAPYSDELRQRLAARLEALKENGGARLAEYHAKATEHLSTLSEKAKPALEDLRQGLLPVLESFKVSFLSALEEYTKKLNTQ</sequence>
<evidence type="ECO:0000250" key="1"/>
<evidence type="ECO:0000250" key="2">
    <source>
        <dbReference type="UniProtKB" id="G5BQH5"/>
    </source>
</evidence>
<evidence type="ECO:0000250" key="3">
    <source>
        <dbReference type="UniProtKB" id="P02647"/>
    </source>
</evidence>
<evidence type="ECO:0000250" key="4">
    <source>
        <dbReference type="UniProtKB" id="P04639"/>
    </source>
</evidence>
<evidence type="ECO:0000255" key="5"/>
<evidence type="ECO:0000269" key="6">
    <source>
    </source>
</evidence>
<evidence type="ECO:0000305" key="7"/>
<organism>
    <name type="scientific">Gorilla gorilla gorilla</name>
    <name type="common">Western lowland gorilla</name>
    <dbReference type="NCBI Taxonomy" id="9595"/>
    <lineage>
        <taxon>Eukaryota</taxon>
        <taxon>Metazoa</taxon>
        <taxon>Chordata</taxon>
        <taxon>Craniata</taxon>
        <taxon>Vertebrata</taxon>
        <taxon>Euteleostomi</taxon>
        <taxon>Mammalia</taxon>
        <taxon>Eutheria</taxon>
        <taxon>Euarchontoglires</taxon>
        <taxon>Primates</taxon>
        <taxon>Haplorrhini</taxon>
        <taxon>Catarrhini</taxon>
        <taxon>Hominidae</taxon>
        <taxon>Gorilla</taxon>
    </lineage>
</organism>
<gene>
    <name type="primary">APOA1</name>
</gene>
<proteinExistence type="evidence at protein level"/>